<feature type="chain" id="PRO_0000426812" description="Glutamyl-tRNA(Gln) amidotransferase subunit A">
    <location>
        <begin position="1"/>
        <end position="494"/>
    </location>
</feature>
<feature type="active site" description="Charge relay system" evidence="1">
    <location>
        <position position="81"/>
    </location>
</feature>
<feature type="active site" description="Charge relay system" evidence="1">
    <location>
        <position position="156"/>
    </location>
</feature>
<feature type="active site" description="Acyl-ester intermediate" evidence="1">
    <location>
        <position position="180"/>
    </location>
</feature>
<gene>
    <name type="primary">gatA</name>
    <name type="ordered locus">MT3091</name>
</gene>
<sequence length="494" mass="51420">MTDIIRSDAATLAAKIAIKEVSSAEITRACLDQIEATDETYHAFLHVAADEALAAAAAIDKQVAAGEPLPSALAGVPLALKDVFTTSDMPTTCGSKILEGWRSPYDATLTARLRAAGIPILGKTNMDEFAMGSSTENSAYGPTRNPWNLDRVPGGSGGGSAAALAAFQAPLAIGSDTGGSIRQPAALTATVGVKPTYGTVSRYGLVACASSLDQGGPCARTVLDTALLHQVIAGHDPRDSTSVDAEVPDVVGAARAGAVGDLRGVRVGVVRQLHGGEGYQPGVLASFEAAVEQLTALGAEVSEVDCPHFDHALAAYYLILPSEVSSNLARFDAMRYGLRVGDDGTRSAEEVMAMTRAAGFGPEVKRRIMIGTYALSAGYYDAYYNQAQKVRTLIARDLDAAYRSVDVLVSPTTPTTAFRLGEKVDDPLAMYLFDLCTLPLNLAGHCGMSVPSGLSPDDGLPVGLQIMAPALADDRLYRVGAAYEAARGPLLSAI</sequence>
<keyword id="KW-0067">ATP-binding</keyword>
<keyword id="KW-0436">Ligase</keyword>
<keyword id="KW-0547">Nucleotide-binding</keyword>
<keyword id="KW-0648">Protein biosynthesis</keyword>
<keyword id="KW-1185">Reference proteome</keyword>
<organism>
    <name type="scientific">Mycobacterium tuberculosis (strain CDC 1551 / Oshkosh)</name>
    <dbReference type="NCBI Taxonomy" id="83331"/>
    <lineage>
        <taxon>Bacteria</taxon>
        <taxon>Bacillati</taxon>
        <taxon>Actinomycetota</taxon>
        <taxon>Actinomycetes</taxon>
        <taxon>Mycobacteriales</taxon>
        <taxon>Mycobacteriaceae</taxon>
        <taxon>Mycobacterium</taxon>
        <taxon>Mycobacterium tuberculosis complex</taxon>
    </lineage>
</organism>
<evidence type="ECO:0000250" key="1"/>
<evidence type="ECO:0000305" key="2"/>
<proteinExistence type="inferred from homology"/>
<protein>
    <recommendedName>
        <fullName>Glutamyl-tRNA(Gln) amidotransferase subunit A</fullName>
        <shortName>Glu-ADT subunit A</shortName>
        <ecNumber>6.3.5.7</ecNumber>
    </recommendedName>
</protein>
<name>GATA_MYCTO</name>
<dbReference type="EC" id="6.3.5.7"/>
<dbReference type="EMBL" id="AE000516">
    <property type="protein sequence ID" value="AAK47420.1"/>
    <property type="molecule type" value="Genomic_DNA"/>
</dbReference>
<dbReference type="PIR" id="F70856">
    <property type="entry name" value="F70856"/>
</dbReference>
<dbReference type="RefSeq" id="WP_003900613.1">
    <property type="nucleotide sequence ID" value="NZ_KK341227.1"/>
</dbReference>
<dbReference type="RefSeq" id="WP_010924602.1">
    <property type="nucleotide sequence ID" value="NC_002755.2"/>
</dbReference>
<dbReference type="SMR" id="P9WQA0"/>
<dbReference type="KEGG" id="mtc:MT3091"/>
<dbReference type="PATRIC" id="fig|83331.31.peg.3332"/>
<dbReference type="HOGENOM" id="CLU_009600_0_3_11"/>
<dbReference type="Proteomes" id="UP000001020">
    <property type="component" value="Chromosome"/>
</dbReference>
<dbReference type="GO" id="GO:0030956">
    <property type="term" value="C:glutamyl-tRNA(Gln) amidotransferase complex"/>
    <property type="evidence" value="ECO:0007669"/>
    <property type="project" value="InterPro"/>
</dbReference>
<dbReference type="GO" id="GO:0005524">
    <property type="term" value="F:ATP binding"/>
    <property type="evidence" value="ECO:0007669"/>
    <property type="project" value="UniProtKB-KW"/>
</dbReference>
<dbReference type="GO" id="GO:0050567">
    <property type="term" value="F:glutaminyl-tRNA synthase (glutamine-hydrolyzing) activity"/>
    <property type="evidence" value="ECO:0007669"/>
    <property type="project" value="UniProtKB-UniRule"/>
</dbReference>
<dbReference type="GO" id="GO:0006412">
    <property type="term" value="P:translation"/>
    <property type="evidence" value="ECO:0007669"/>
    <property type="project" value="UniProtKB-UniRule"/>
</dbReference>
<dbReference type="Gene3D" id="3.90.1300.10">
    <property type="entry name" value="Amidase signature (AS) domain"/>
    <property type="match status" value="1"/>
</dbReference>
<dbReference type="HAMAP" id="MF_00120">
    <property type="entry name" value="GatA"/>
    <property type="match status" value="1"/>
</dbReference>
<dbReference type="InterPro" id="IPR000120">
    <property type="entry name" value="Amidase"/>
</dbReference>
<dbReference type="InterPro" id="IPR020556">
    <property type="entry name" value="Amidase_CS"/>
</dbReference>
<dbReference type="InterPro" id="IPR023631">
    <property type="entry name" value="Amidase_dom"/>
</dbReference>
<dbReference type="InterPro" id="IPR036928">
    <property type="entry name" value="AS_sf"/>
</dbReference>
<dbReference type="InterPro" id="IPR004412">
    <property type="entry name" value="GatA"/>
</dbReference>
<dbReference type="NCBIfam" id="TIGR00132">
    <property type="entry name" value="gatA"/>
    <property type="match status" value="1"/>
</dbReference>
<dbReference type="PANTHER" id="PTHR11895:SF151">
    <property type="entry name" value="GLUTAMYL-TRNA(GLN) AMIDOTRANSFERASE SUBUNIT A"/>
    <property type="match status" value="1"/>
</dbReference>
<dbReference type="PANTHER" id="PTHR11895">
    <property type="entry name" value="TRANSAMIDASE"/>
    <property type="match status" value="1"/>
</dbReference>
<dbReference type="Pfam" id="PF01425">
    <property type="entry name" value="Amidase"/>
    <property type="match status" value="1"/>
</dbReference>
<dbReference type="SUPFAM" id="SSF75304">
    <property type="entry name" value="Amidase signature (AS) enzymes"/>
    <property type="match status" value="1"/>
</dbReference>
<dbReference type="PROSITE" id="PS00571">
    <property type="entry name" value="AMIDASES"/>
    <property type="match status" value="1"/>
</dbReference>
<accession>P9WQA0</accession>
<accession>L0TE79</accession>
<accession>O53258</accession>
<reference key="1">
    <citation type="journal article" date="2002" name="J. Bacteriol.">
        <title>Whole-genome comparison of Mycobacterium tuberculosis clinical and laboratory strains.</title>
        <authorList>
            <person name="Fleischmann R.D."/>
            <person name="Alland D."/>
            <person name="Eisen J.A."/>
            <person name="Carpenter L."/>
            <person name="White O."/>
            <person name="Peterson J.D."/>
            <person name="DeBoy R.T."/>
            <person name="Dodson R.J."/>
            <person name="Gwinn M.L."/>
            <person name="Haft D.H."/>
            <person name="Hickey E.K."/>
            <person name="Kolonay J.F."/>
            <person name="Nelson W.C."/>
            <person name="Umayam L.A."/>
            <person name="Ermolaeva M.D."/>
            <person name="Salzberg S.L."/>
            <person name="Delcher A."/>
            <person name="Utterback T.R."/>
            <person name="Weidman J.F."/>
            <person name="Khouri H.M."/>
            <person name="Gill J."/>
            <person name="Mikula A."/>
            <person name="Bishai W."/>
            <person name="Jacobs W.R. Jr."/>
            <person name="Venter J.C."/>
            <person name="Fraser C.M."/>
        </authorList>
    </citation>
    <scope>NUCLEOTIDE SEQUENCE [LARGE SCALE GENOMIC DNA]</scope>
    <source>
        <strain>CDC 1551 / Oshkosh</strain>
    </source>
</reference>
<comment type="function">
    <text evidence="1">Allows the formation of correctly charged Gln-tRNA(Gln) through the transamidation of misacylated Glu-tRNA(Gln) in organisms which lack glutaminyl-tRNA synthetase. The reaction takes place in the presence of glutamine and ATP through an activated gamma-phospho-Glu-tRNA(Gln) (By similarity).</text>
</comment>
<comment type="catalytic activity">
    <reaction>
        <text>L-glutamyl-tRNA(Gln) + L-glutamine + ATP + H2O = L-glutaminyl-tRNA(Gln) + L-glutamate + ADP + phosphate + H(+)</text>
        <dbReference type="Rhea" id="RHEA:17521"/>
        <dbReference type="Rhea" id="RHEA-COMP:9681"/>
        <dbReference type="Rhea" id="RHEA-COMP:9684"/>
        <dbReference type="ChEBI" id="CHEBI:15377"/>
        <dbReference type="ChEBI" id="CHEBI:15378"/>
        <dbReference type="ChEBI" id="CHEBI:29985"/>
        <dbReference type="ChEBI" id="CHEBI:30616"/>
        <dbReference type="ChEBI" id="CHEBI:43474"/>
        <dbReference type="ChEBI" id="CHEBI:58359"/>
        <dbReference type="ChEBI" id="CHEBI:78520"/>
        <dbReference type="ChEBI" id="CHEBI:78521"/>
        <dbReference type="ChEBI" id="CHEBI:456216"/>
        <dbReference type="EC" id="6.3.5.7"/>
    </reaction>
</comment>
<comment type="subunit">
    <text evidence="1">Heterotrimer of A, B and C subunits.</text>
</comment>
<comment type="similarity">
    <text evidence="2">Belongs to the amidase family. GatA subfamily.</text>
</comment>